<feature type="chain" id="PRO_0000413978" description="Alpha-maltose-1-phosphate synthase">
    <location>
        <begin position="1"/>
        <end position="387"/>
    </location>
</feature>
<protein>
    <recommendedName>
        <fullName evidence="3">Alpha-maltose-1-phosphate synthase</fullName>
        <shortName evidence="3">M1P synthase</shortName>
        <ecNumber evidence="2">2.4.1.342</ecNumber>
    </recommendedName>
    <alternativeName>
        <fullName evidence="5">ADP-alpha-D-glucose:alpha-D-glucose-1-phosphate 4-alpha-D-glucosyltransferase</fullName>
    </alternativeName>
    <alternativeName>
        <fullName evidence="3">M1P-producing glucosyltransferase</fullName>
    </alternativeName>
</protein>
<keyword id="KW-0972">Capsule biogenesis/degradation</keyword>
<keyword id="KW-0119">Carbohydrate metabolism</keyword>
<keyword id="KW-0328">Glycosyltransferase</keyword>
<keyword id="KW-1185">Reference proteome</keyword>
<keyword id="KW-0808">Transferase</keyword>
<accession>P9WMZ1</accession>
<accession>L0T8Z4</accession>
<accession>O05313</accession>
<accession>Q7D8L6</accession>
<organism>
    <name type="scientific">Mycobacterium tuberculosis (strain ATCC 25618 / H37Rv)</name>
    <dbReference type="NCBI Taxonomy" id="83332"/>
    <lineage>
        <taxon>Bacteria</taxon>
        <taxon>Bacillati</taxon>
        <taxon>Actinomycetota</taxon>
        <taxon>Actinomycetes</taxon>
        <taxon>Mycobacteriales</taxon>
        <taxon>Mycobacteriaceae</taxon>
        <taxon>Mycobacterium</taxon>
        <taxon>Mycobacterium tuberculosis complex</taxon>
    </lineage>
</organism>
<proteinExistence type="evidence at protein level"/>
<gene>
    <name evidence="3" type="primary">glgM</name>
    <name type="synonym">glgA</name>
    <name type="ordered locus">Rv1212c</name>
</gene>
<evidence type="ECO:0000269" key="1">
    <source>
    </source>
</evidence>
<evidence type="ECO:0000269" key="2">
    <source>
    </source>
</evidence>
<evidence type="ECO:0000303" key="3">
    <source>
    </source>
</evidence>
<evidence type="ECO:0000305" key="4"/>
<evidence type="ECO:0000305" key="5">
    <source>
    </source>
</evidence>
<comment type="function">
    <text evidence="1 2">Involved in the biosynthesis of the maltose-1-phosphate (M1P) building block required for alpha-glucan production by the key enzyme GlgE (PubMed:18808383, PubMed:27513637). Catalyzes the formation of an alpha-1,4 linkage between glucose from ADP-glucose and glucose 1-phosphate (G1P) to yield maltose-1-phosphate (M1P) (PubMed:27513637). Also able to catalyze the elongation of the non-reducing ends of glycogen, maltodextrin and maltoheptaose using ADP-glucose as sugar donor, however the rate of the reaction appears to be too low to be physiologically relevant (PubMed:27513637). GlgM is also able to use UDP-glucose as sugar donor with G1P, however, it is less efficient than with ADP-glucose (PubMed:27513637). UDP-glucose is not used as sugar donor when glycogen is used as acceptor (PubMed:27513637).</text>
</comment>
<comment type="catalytic activity">
    <reaction evidence="2">
        <text>ADP-alpha-D-glucose + alpha-D-glucose 1-phosphate = alpha-maltose 1-phosphate + ADP + H(+)</text>
        <dbReference type="Rhea" id="RHEA:50692"/>
        <dbReference type="ChEBI" id="CHEBI:15378"/>
        <dbReference type="ChEBI" id="CHEBI:57498"/>
        <dbReference type="ChEBI" id="CHEBI:58601"/>
        <dbReference type="ChEBI" id="CHEBI:63576"/>
        <dbReference type="ChEBI" id="CHEBI:456216"/>
        <dbReference type="EC" id="2.4.1.342"/>
    </reaction>
</comment>
<comment type="activity regulation">
    <text evidence="2">Inhibited at high G1P concentrations.</text>
</comment>
<comment type="biophysicochemical properties">
    <kinetics>
        <KM evidence="2">0.046 mM for ADP-glucose (with 4 mM of G1P)</KM>
        <KM evidence="2">0.063 mM for ADP-glucose (with 2.5 mM of G1P)</KM>
        <KM evidence="2">0.121 mM for ADP-glucose (with 1 mM of G1P)</KM>
        <KM evidence="2">0.145 mM for ADP-glucose (with 0.25 mM of G1P)</KM>
        <KM evidence="2">0.4 mM for alpha-glucan</KM>
        <KM evidence="2">0.695 mM for G1P (with 4 mM of ADP-glucose)</KM>
        <KM evidence="2">0.816 mM for G1P (with 0.1 mM of ADP-glucose)</KM>
        <KM evidence="2">0.9 mM for rabbit liver glycogen</KM>
        <KM evidence="2">1.29 mM for G1P (with 0.5 mM of ADP-glucose)</KM>
        <Vmax evidence="2">136.0 umol/min/mg enzyme toward G1P (with 0.5 mM of ADP-glucose)</Vmax>
        <Vmax evidence="2">113.0 umol/min/mg enzyme toward G1P (with 4 mM of ADP-glucose)</Vmax>
        <Vmax evidence="2">54.2 umol/min/mg enzyme toward G1P (with 0.1 mM of ADP-glucose)</Vmax>
        <Vmax evidence="2">40.5 umol/min/mg enzyme toward ADP-glucose (with 1 mM of G1P)</Vmax>
        <Vmax evidence="2">27.7 umol/min/mg enzyme toward ADP-glucose (with 0.25 mM of G1P)</Vmax>
        <Vmax evidence="2">27.5 umol/min/mg enzyme toward ADP-glucose (with 2.5 mM of G1P)</Vmax>
        <Vmax evidence="2">21.4 umol/min/mg enzyme toward ADP-glucose (with 4 mM of G1P)</Vmax>
        <Vmax evidence="2">0.12 umol/min/mg enzyme with rabbit liver glycogen as substrate</Vmax>
        <Vmax evidence="2">0.02 umol/min/mg enzyme with alpha-glucan as substrate</Vmax>
        <text evidence="2">kcat is 97.9 sec(-1) for G1P as substrate (with 0.5 mM of ADP-glucose). kcat is 80.6 sec(-1) for G1P as substrate (with 4 mM of ADP-glucose). kcat is 39 sec(-1) for G1P as substrate (with 0.1 mM of ADP-glucose). kcat is 29.2 sec(-1) for ADP-glucose as substrate (with 1 mM of G1P). kcat is 20 sec(-1) for ADP-glucose as substrate (with 0.25 mM of G1P). kcat is 19.8 sec(-1) for ADP-glucose as substrate (with 2.5 mM of G1P). kcat is 15.4 sec(-1) for ADP-glucose as substrate (with 4 mM of G1P). kcat is 0.09 sec(-1) for rabbit liver glycogen as substrate. kcat is 0.014 sec(-1) for alpha-glucan as substrate.</text>
    </kinetics>
</comment>
<comment type="pathway">
    <text evidence="1 2">Capsule biogenesis; capsule polysaccharide biosynthesis.</text>
</comment>
<comment type="pathway">
    <text evidence="1 2">Glycan biosynthesis; glycogen biosynthesis.</text>
</comment>
<comment type="disruption phenotype">
    <text evidence="1 2">Inactivation of glgM affects the production of extracellular alpha-glucan (two-fold reduction), but not that of intracellular glycogen and 6-O-methylglucosyl lipopolysaccharides (MGLP) (PubMed:18808383, PubMed:27513637). Cells lacking this gene are also impaired in their ability to persist in both the spleen and the lungs of mice (PubMed:18808383). Combined inactivation of both glgM and ostA is lethal, potentially due to accumulation of toxic levels of ADP-glucose (PubMed:27513637). Combined inactivation of both glgM and treS results in absence of alpha-glucan (PubMed:27513637).</text>
</comment>
<comment type="miscellaneous">
    <text evidence="2">Maltose-1-phosphate (M1P) is generated by two alternative routes: the TreS-Pep2 branch and the GlgC-GlgM branch, however it seems that TreS-Pep2 branch provides most of M1P for the GlgE pathway in M.tuberculosis.</text>
</comment>
<comment type="miscellaneous">
    <text evidence="1">Attempts to disrupt both the Rv3032 gene and glgA in order to create a mutant simultaneously deficient in both alpha-1,4-glucosyltransferases turned out to be unsuccessful. Thus, M.tuberculosis H37Rv requires a functional copy of at least one of these two genes for growth.</text>
</comment>
<comment type="similarity">
    <text evidence="4">Belongs to the glycosyltransferase group 1 family.</text>
</comment>
<dbReference type="EC" id="2.4.1.342" evidence="2"/>
<dbReference type="EMBL" id="AL123456">
    <property type="protein sequence ID" value="CCP43968.1"/>
    <property type="molecule type" value="Genomic_DNA"/>
</dbReference>
<dbReference type="PIR" id="B70610">
    <property type="entry name" value="B70610"/>
</dbReference>
<dbReference type="RefSeq" id="NP_215728.1">
    <property type="nucleotide sequence ID" value="NC_000962.3"/>
</dbReference>
<dbReference type="RefSeq" id="WP_003898773.1">
    <property type="nucleotide sequence ID" value="NZ_NVQJ01000039.1"/>
</dbReference>
<dbReference type="SMR" id="P9WMZ1"/>
<dbReference type="FunCoup" id="P9WMZ1">
    <property type="interactions" value="277"/>
</dbReference>
<dbReference type="STRING" id="83332.Rv1212c"/>
<dbReference type="PaxDb" id="83332-Rv1212c"/>
<dbReference type="GeneID" id="887805"/>
<dbReference type="KEGG" id="mtu:Rv1212c"/>
<dbReference type="KEGG" id="mtv:RVBD_1212c"/>
<dbReference type="TubercuList" id="Rv1212c"/>
<dbReference type="eggNOG" id="COG0297">
    <property type="taxonomic scope" value="Bacteria"/>
</dbReference>
<dbReference type="InParanoid" id="P9WMZ1"/>
<dbReference type="OrthoDB" id="6286688at2"/>
<dbReference type="PhylomeDB" id="P9WMZ1"/>
<dbReference type="BioCyc" id="MetaCyc:G185E-5382-MONOMER"/>
<dbReference type="BRENDA" id="2.4.1.342">
    <property type="organism ID" value="3445"/>
</dbReference>
<dbReference type="UniPathway" id="UPA00164"/>
<dbReference type="UniPathway" id="UPA00934"/>
<dbReference type="Proteomes" id="UP000001584">
    <property type="component" value="Chromosome"/>
</dbReference>
<dbReference type="GO" id="GO:0016757">
    <property type="term" value="F:glycosyltransferase activity"/>
    <property type="evidence" value="ECO:0000318"/>
    <property type="project" value="GO_Central"/>
</dbReference>
<dbReference type="GO" id="GO:0045227">
    <property type="term" value="P:capsule polysaccharide biosynthetic process"/>
    <property type="evidence" value="ECO:0007669"/>
    <property type="project" value="UniProtKB-UniPathway"/>
</dbReference>
<dbReference type="GO" id="GO:0009250">
    <property type="term" value="P:glucan biosynthetic process"/>
    <property type="evidence" value="ECO:0000315"/>
    <property type="project" value="MTBBASE"/>
</dbReference>
<dbReference type="GO" id="GO:0005978">
    <property type="term" value="P:glycogen biosynthetic process"/>
    <property type="evidence" value="ECO:0007669"/>
    <property type="project" value="UniProtKB-UniPathway"/>
</dbReference>
<dbReference type="CDD" id="cd03801">
    <property type="entry name" value="GT4_PimA-like"/>
    <property type="match status" value="1"/>
</dbReference>
<dbReference type="Gene3D" id="3.40.50.2000">
    <property type="entry name" value="Glycogen Phosphorylase B"/>
    <property type="match status" value="2"/>
</dbReference>
<dbReference type="InterPro" id="IPR001296">
    <property type="entry name" value="Glyco_trans_1"/>
</dbReference>
<dbReference type="InterPro" id="IPR028098">
    <property type="entry name" value="Glyco_trans_4-like_N"/>
</dbReference>
<dbReference type="InterPro" id="IPR011875">
    <property type="entry name" value="M1P_synthase"/>
</dbReference>
<dbReference type="NCBIfam" id="TIGR02149">
    <property type="entry name" value="glgA_Coryne"/>
    <property type="match status" value="1"/>
</dbReference>
<dbReference type="PANTHER" id="PTHR12526:SF590">
    <property type="entry name" value="ALPHA-MALTOSE-1-PHOSPHATE SYNTHASE"/>
    <property type="match status" value="1"/>
</dbReference>
<dbReference type="PANTHER" id="PTHR12526">
    <property type="entry name" value="GLYCOSYLTRANSFERASE"/>
    <property type="match status" value="1"/>
</dbReference>
<dbReference type="Pfam" id="PF13439">
    <property type="entry name" value="Glyco_transf_4"/>
    <property type="match status" value="1"/>
</dbReference>
<dbReference type="Pfam" id="PF00534">
    <property type="entry name" value="Glycos_transf_1"/>
    <property type="match status" value="1"/>
</dbReference>
<dbReference type="SUPFAM" id="SSF53756">
    <property type="entry name" value="UDP-Glycosyltransferase/glycogen phosphorylase"/>
    <property type="match status" value="1"/>
</dbReference>
<sequence>MRVAMLTREYPPEVYGGAGVHVTELVAYLRRLCAVDVHCMGAPRPGAFAYRPDPRLGSANAALSTLSADLVMANAASAATVVHSHTWYTALAGHLAAILYDIPHVLTAHSLEPLRPWKKEQLGGGYQVSTWVEQTAVLAANAVIAVSSAMRNDMLRVYPSLDPNLVHVIRNGIDTETWYPAGPARTGSVLAELGVDPNRPMAVFVGRITRQKGVVHLVTAAHRFRSDVQLVLCAGAADTPEVADEVRVAVAELARNRTGVFWIQDRLTIGQLREILSAATVFVCPSVYEPLGIVNLEAMACATAVVASDVGGIPEVVADGITGSLVHYDADDATGYQARLAEAVNALVADPATAERYGHAGRQRCIQEFSWAYIAEQTLDIYRKVCA</sequence>
<name>GLGM_MYCTU</name>
<reference key="1">
    <citation type="journal article" date="1998" name="Nature">
        <title>Deciphering the biology of Mycobacterium tuberculosis from the complete genome sequence.</title>
        <authorList>
            <person name="Cole S.T."/>
            <person name="Brosch R."/>
            <person name="Parkhill J."/>
            <person name="Garnier T."/>
            <person name="Churcher C.M."/>
            <person name="Harris D.E."/>
            <person name="Gordon S.V."/>
            <person name="Eiglmeier K."/>
            <person name="Gas S."/>
            <person name="Barry C.E. III"/>
            <person name="Tekaia F."/>
            <person name="Badcock K."/>
            <person name="Basham D."/>
            <person name="Brown D."/>
            <person name="Chillingworth T."/>
            <person name="Connor R."/>
            <person name="Davies R.M."/>
            <person name="Devlin K."/>
            <person name="Feltwell T."/>
            <person name="Gentles S."/>
            <person name="Hamlin N."/>
            <person name="Holroyd S."/>
            <person name="Hornsby T."/>
            <person name="Jagels K."/>
            <person name="Krogh A."/>
            <person name="McLean J."/>
            <person name="Moule S."/>
            <person name="Murphy L.D."/>
            <person name="Oliver S."/>
            <person name="Osborne J."/>
            <person name="Quail M.A."/>
            <person name="Rajandream M.A."/>
            <person name="Rogers J."/>
            <person name="Rutter S."/>
            <person name="Seeger K."/>
            <person name="Skelton S."/>
            <person name="Squares S."/>
            <person name="Squares R."/>
            <person name="Sulston J.E."/>
            <person name="Taylor K."/>
            <person name="Whitehead S."/>
            <person name="Barrell B.G."/>
        </authorList>
    </citation>
    <scope>NUCLEOTIDE SEQUENCE [LARGE SCALE GENOMIC DNA]</scope>
    <source>
        <strain>ATCC 25618 / H37Rv</strain>
    </source>
</reference>
<reference key="2">
    <citation type="journal article" date="2008" name="Mol. Microbiol.">
        <title>Capsular glucan and intracellular glycogen of Mycobacterium tuberculosis: biosynthesis and impact on the persistence in mice.</title>
        <authorList>
            <person name="Sambou T."/>
            <person name="Dinadayala P."/>
            <person name="Stadthagen G."/>
            <person name="Barilone N."/>
            <person name="Bordat Y."/>
            <person name="Constant P."/>
            <person name="Levillain F."/>
            <person name="Neyrolles O."/>
            <person name="Gicquel B."/>
            <person name="Lemassu A."/>
            <person name="Daffe M."/>
            <person name="Jackson M."/>
        </authorList>
    </citation>
    <scope>FUNCTION</scope>
    <scope>DISRUPTION PHENOTYPE</scope>
    <scope>PATHWAY</scope>
    <source>
        <strain>ATCC 25618 / H37Rv</strain>
    </source>
</reference>
<reference key="3">
    <citation type="journal article" date="2011" name="Mol. Cell. Proteomics">
        <title>Proteogenomic analysis of Mycobacterium tuberculosis by high resolution mass spectrometry.</title>
        <authorList>
            <person name="Kelkar D.S."/>
            <person name="Kumar D."/>
            <person name="Kumar P."/>
            <person name="Balakrishnan L."/>
            <person name="Muthusamy B."/>
            <person name="Yadav A.K."/>
            <person name="Shrivastava P."/>
            <person name="Marimuthu A."/>
            <person name="Anand S."/>
            <person name="Sundaram H."/>
            <person name="Kingsbury R."/>
            <person name="Harsha H.C."/>
            <person name="Nair B."/>
            <person name="Prasad T.S."/>
            <person name="Chauhan D.S."/>
            <person name="Katoch K."/>
            <person name="Katoch V.M."/>
            <person name="Kumar P."/>
            <person name="Chaerkady R."/>
            <person name="Ramachandran S."/>
            <person name="Dash D."/>
            <person name="Pandey A."/>
        </authorList>
    </citation>
    <scope>IDENTIFICATION BY MASS SPECTROMETRY [LARGE SCALE ANALYSIS]</scope>
    <source>
        <strain>ATCC 25618 / H37Rv</strain>
    </source>
</reference>
<reference key="4">
    <citation type="journal article" date="2016" name="PLoS Pathog.">
        <title>Metabolic network for the biosynthesis of intra- and extracellular alpha-glucans required for virulence of Mycobacterium tuberculosis.</title>
        <authorList>
            <person name="Koliwer-Brandl H."/>
            <person name="Syson K."/>
            <person name="van de Weerd R."/>
            <person name="Chandra G."/>
            <person name="Appelmelk B."/>
            <person name="Alber M."/>
            <person name="Ioerger T.R."/>
            <person name="Jacobs W.R. Jr."/>
            <person name="Geurtsen J."/>
            <person name="Bornemann S."/>
            <person name="Kalscheuer R."/>
        </authorList>
    </citation>
    <scope>FUNCTION</scope>
    <scope>CATALYTIC ACTIVITY</scope>
    <scope>BIOPHYSICOCHEMICAL PROPERTIES</scope>
    <scope>DISRUPTION PHENOTYPE</scope>
    <scope>ACTIVITY REGULATION</scope>
    <scope>PATHWAY</scope>
    <scope>SUBSTRATE SPECIFICITY</scope>
</reference>